<organism>
    <name type="scientific">Mus musculus</name>
    <name type="common">Mouse</name>
    <dbReference type="NCBI Taxonomy" id="10090"/>
    <lineage>
        <taxon>Eukaryota</taxon>
        <taxon>Metazoa</taxon>
        <taxon>Chordata</taxon>
        <taxon>Craniata</taxon>
        <taxon>Vertebrata</taxon>
        <taxon>Euteleostomi</taxon>
        <taxon>Mammalia</taxon>
        <taxon>Eutheria</taxon>
        <taxon>Euarchontoglires</taxon>
        <taxon>Glires</taxon>
        <taxon>Rodentia</taxon>
        <taxon>Myomorpha</taxon>
        <taxon>Muroidea</taxon>
        <taxon>Muridae</taxon>
        <taxon>Murinae</taxon>
        <taxon>Mus</taxon>
        <taxon>Mus</taxon>
    </lineage>
</organism>
<gene>
    <name type="primary">Ankra2</name>
    <name type="synonym">Ankra</name>
</gene>
<reference key="1">
    <citation type="journal article" date="2000" name="J. Am. Soc. Nephrol.">
        <title>Characterization of ANKRA, a novel ankyrin repeat protein that interacts with the cytoplasmic domain of megalin.</title>
        <authorList>
            <person name="Rader K."/>
            <person name="Orlando R.A."/>
            <person name="Lou X."/>
            <person name="Farquhar M.G."/>
        </authorList>
    </citation>
    <scope>NUCLEOTIDE SEQUENCE [MRNA]</scope>
    <scope>FUNCTION</scope>
    <scope>INTERACTION WITH LRP2</scope>
    <scope>SUBCELLULAR LOCATION</scope>
</reference>
<reference key="2">
    <citation type="journal article" date="2007" name="Biochem. Biophys. Res. Commun.">
        <title>Molecular mechanism of transcriptional repression of AhR repressor involving ANKRA2, HDAC4, and HDAC5.</title>
        <authorList>
            <person name="Oshima M."/>
            <person name="Mimura J."/>
            <person name="Yamamoto M."/>
            <person name="Fujii-Kuriyama Y."/>
        </authorList>
    </citation>
    <scope>INTERACTION WITH AHRR</scope>
</reference>
<protein>
    <recommendedName>
        <fullName>Ankyrin repeat family A protein 2</fullName>
    </recommendedName>
    <alternativeName>
        <fullName>RFXANK-like protein 2</fullName>
    </alternativeName>
</protein>
<sequence>MATSANLDIGAQLIVEECPSSYISGMPDIKLEHQLDPNPDEGAAQGVAMGMKFILPNRFDMNVCSRFVKSLNEEDSKNIQDQVNSDLEVASVLFKAECNIHTSPSPGIQVRHVYTPSTTKHFSPIKQSTTLTNKHRGNEVSTTPLLANSLSAHQLAAQGEMLYLATRIEQENVINHTDEEGFTPLMWAAAHGQIAVVEFLLQNGADPQLLGKGRESALSLACSKGYTDIVKMLLDCGVDVNEYDWNGGTPLLYAVHGNHVKCVKMLLENGADPTIETDSGYNSMDLAVALGYRGVQQAIESHLLKLLQNIRE</sequence>
<dbReference type="EMBL" id="AF314031">
    <property type="protein sequence ID" value="AAK01620.1"/>
    <property type="molecule type" value="mRNA"/>
</dbReference>
<dbReference type="CCDS" id="CCDS26713.1"/>
<dbReference type="RefSeq" id="NP_075961.1">
    <property type="nucleotide sequence ID" value="NM_023472.2"/>
</dbReference>
<dbReference type="SMR" id="Q99PE2"/>
<dbReference type="BioGRID" id="212926">
    <property type="interactions" value="2"/>
</dbReference>
<dbReference type="ELM" id="Q99PE2"/>
<dbReference type="FunCoup" id="Q99PE2">
    <property type="interactions" value="2768"/>
</dbReference>
<dbReference type="IntAct" id="Q99PE2">
    <property type="interactions" value="1"/>
</dbReference>
<dbReference type="STRING" id="10090.ENSMUSP00000022164"/>
<dbReference type="iPTMnet" id="Q99PE2"/>
<dbReference type="PhosphoSitePlus" id="Q99PE2"/>
<dbReference type="PaxDb" id="10090-ENSMUSP00000022164"/>
<dbReference type="ProteomicsDB" id="281884"/>
<dbReference type="Antibodypedia" id="24269">
    <property type="antibodies" value="187 antibodies from 23 providers"/>
</dbReference>
<dbReference type="DNASU" id="68558"/>
<dbReference type="Ensembl" id="ENSMUST00000022164.16">
    <property type="protein sequence ID" value="ENSMUSP00000022164.9"/>
    <property type="gene ID" value="ENSMUSG00000021661.17"/>
</dbReference>
<dbReference type="GeneID" id="68558"/>
<dbReference type="KEGG" id="mmu:68558"/>
<dbReference type="UCSC" id="uc007ror.2">
    <property type="organism name" value="mouse"/>
</dbReference>
<dbReference type="AGR" id="MGI:1915808"/>
<dbReference type="CTD" id="57763"/>
<dbReference type="MGI" id="MGI:1915808">
    <property type="gene designation" value="Ankra2"/>
</dbReference>
<dbReference type="VEuPathDB" id="HostDB:ENSMUSG00000021661"/>
<dbReference type="eggNOG" id="KOG0502">
    <property type="taxonomic scope" value="Eukaryota"/>
</dbReference>
<dbReference type="GeneTree" id="ENSGT00940000157156"/>
<dbReference type="HOGENOM" id="CLU_078123_0_0_1"/>
<dbReference type="InParanoid" id="Q99PE2"/>
<dbReference type="OrthoDB" id="10251692at2759"/>
<dbReference type="PhylomeDB" id="Q99PE2"/>
<dbReference type="TreeFam" id="TF333112"/>
<dbReference type="BioGRID-ORCS" id="68558">
    <property type="hits" value="2 hits in 79 CRISPR screens"/>
</dbReference>
<dbReference type="ChiTaRS" id="Ankra2">
    <property type="organism name" value="mouse"/>
</dbReference>
<dbReference type="PRO" id="PR:Q99PE2"/>
<dbReference type="Proteomes" id="UP000000589">
    <property type="component" value="Chromosome 13"/>
</dbReference>
<dbReference type="RNAct" id="Q99PE2">
    <property type="molecule type" value="protein"/>
</dbReference>
<dbReference type="Bgee" id="ENSMUSG00000021661">
    <property type="expression patterns" value="Expressed in cortical plate and 246 other cell types or tissues"/>
</dbReference>
<dbReference type="ExpressionAtlas" id="Q99PE2">
    <property type="expression patterns" value="baseline and differential"/>
</dbReference>
<dbReference type="GO" id="GO:1990393">
    <property type="term" value="C:3M complex"/>
    <property type="evidence" value="ECO:0007669"/>
    <property type="project" value="Ensembl"/>
</dbReference>
<dbReference type="GO" id="GO:0005737">
    <property type="term" value="C:cytoplasm"/>
    <property type="evidence" value="ECO:0000316"/>
    <property type="project" value="MGI"/>
</dbReference>
<dbReference type="GO" id="GO:0005856">
    <property type="term" value="C:cytoskeleton"/>
    <property type="evidence" value="ECO:0007669"/>
    <property type="project" value="UniProtKB-SubCell"/>
</dbReference>
<dbReference type="GO" id="GO:0005829">
    <property type="term" value="C:cytosol"/>
    <property type="evidence" value="ECO:0007669"/>
    <property type="project" value="Ensembl"/>
</dbReference>
<dbReference type="GO" id="GO:0016020">
    <property type="term" value="C:membrane"/>
    <property type="evidence" value="ECO:0000314"/>
    <property type="project" value="MGI"/>
</dbReference>
<dbReference type="GO" id="GO:0005634">
    <property type="term" value="C:nucleus"/>
    <property type="evidence" value="ECO:0000316"/>
    <property type="project" value="MGI"/>
</dbReference>
<dbReference type="GO" id="GO:0042826">
    <property type="term" value="F:histone deacetylase binding"/>
    <property type="evidence" value="ECO:0000314"/>
    <property type="project" value="MGI"/>
</dbReference>
<dbReference type="GO" id="GO:0050750">
    <property type="term" value="F:low-density lipoprotein particle receptor binding"/>
    <property type="evidence" value="ECO:0007669"/>
    <property type="project" value="Ensembl"/>
</dbReference>
<dbReference type="GO" id="GO:0019901">
    <property type="term" value="F:protein kinase binding"/>
    <property type="evidence" value="ECO:0007669"/>
    <property type="project" value="Ensembl"/>
</dbReference>
<dbReference type="GO" id="GO:0031625">
    <property type="term" value="F:ubiquitin protein ligase binding"/>
    <property type="evidence" value="ECO:0000250"/>
    <property type="project" value="UniProtKB"/>
</dbReference>
<dbReference type="GO" id="GO:0043254">
    <property type="term" value="P:regulation of protein-containing complex assembly"/>
    <property type="evidence" value="ECO:0000250"/>
    <property type="project" value="UniProtKB"/>
</dbReference>
<dbReference type="FunFam" id="1.25.40.20:FF:000031">
    <property type="entry name" value="Ankyrin repeat, family A (RFXANK-like), 2"/>
    <property type="match status" value="1"/>
</dbReference>
<dbReference type="Gene3D" id="1.25.40.20">
    <property type="entry name" value="Ankyrin repeat-containing domain"/>
    <property type="match status" value="1"/>
</dbReference>
<dbReference type="InterPro" id="IPR002110">
    <property type="entry name" value="Ankyrin_rpt"/>
</dbReference>
<dbReference type="InterPro" id="IPR036770">
    <property type="entry name" value="Ankyrin_rpt-contain_sf"/>
</dbReference>
<dbReference type="PANTHER" id="PTHR24124">
    <property type="entry name" value="ANKYRIN REPEAT FAMILY A"/>
    <property type="match status" value="1"/>
</dbReference>
<dbReference type="PANTHER" id="PTHR24124:SF3">
    <property type="entry name" value="ANKYRIN REPEAT FAMILY A PROTEIN 2"/>
    <property type="match status" value="1"/>
</dbReference>
<dbReference type="Pfam" id="PF12796">
    <property type="entry name" value="Ank_2"/>
    <property type="match status" value="2"/>
</dbReference>
<dbReference type="PRINTS" id="PR01415">
    <property type="entry name" value="ANKYRIN"/>
</dbReference>
<dbReference type="SMART" id="SM00248">
    <property type="entry name" value="ANK"/>
    <property type="match status" value="3"/>
</dbReference>
<dbReference type="SUPFAM" id="SSF48403">
    <property type="entry name" value="Ankyrin repeat"/>
    <property type="match status" value="1"/>
</dbReference>
<dbReference type="PROSITE" id="PS50297">
    <property type="entry name" value="ANK_REP_REGION"/>
    <property type="match status" value="1"/>
</dbReference>
<dbReference type="PROSITE" id="PS50088">
    <property type="entry name" value="ANK_REPEAT"/>
    <property type="match status" value="3"/>
</dbReference>
<evidence type="ECO:0000250" key="1">
    <source>
        <dbReference type="UniProtKB" id="Q9H9E1"/>
    </source>
</evidence>
<evidence type="ECO:0000269" key="2">
    <source>
    </source>
</evidence>
<evidence type="ECO:0000269" key="3">
    <source>
    </source>
</evidence>
<keyword id="KW-0040">ANK repeat</keyword>
<keyword id="KW-0963">Cytoplasm</keyword>
<keyword id="KW-0206">Cytoskeleton</keyword>
<keyword id="KW-0472">Membrane</keyword>
<keyword id="KW-1185">Reference proteome</keyword>
<keyword id="KW-0677">Repeat</keyword>
<comment type="function">
    <text evidence="1 2">May regulate the interaction between the 3M complex and the histone deacetylases HDAC4 and HDAC5 (By similarity). May also regulate LRP2/megalin (PubMed:11095640).</text>
</comment>
<comment type="subunit">
    <text evidence="1 2 3">Interacts (via ANK repeats) with CCDC8 (via PxLPxI/L motif); mediates the interaction with the 3M complex which is composed of CCDC8, CUL7 and OBSL1. Interacts (via ANK repeats) with HDAC4 (via PxLPxI/L motif). Interacts (via ANK repeats) with HDAC5 (via PxLPxI/L motif) (By similarity). Interacts (via ANK repeats) with LRP2/megalin (via PxLPxI/L motif) (PubMed:11095640). Interacts (via ANK repeats) with RFX7 (via PxLPxI/L motif) (By similarity). Interacts with AHRR (PubMed:17949687). Interacts with NEK6 (By similarity).</text>
</comment>
<comment type="subcellular location">
    <subcellularLocation>
        <location evidence="2">Cytoplasm</location>
        <location evidence="2">Cytoskeleton</location>
    </subcellularLocation>
    <subcellularLocation>
        <location evidence="2">Membrane</location>
        <topology evidence="2">Peripheral membrane protein</topology>
    </subcellularLocation>
</comment>
<comment type="domain">
    <text evidence="1">The ankyrin repeats, mainly ANK 2, ANK 3 and ANK 4, mediate interaction with a wide array of PxLPxI/L motif-containing proteins including HDAC4 and LRP2. The PxLPxI/L motif of interactors can contain a Ser or a Thr residue in position 2, which phosphorylation prevents the interaction with ANKRA2.</text>
</comment>
<feature type="chain" id="PRO_0000066896" description="Ankyrin repeat family A protein 2">
    <location>
        <begin position="1"/>
        <end position="312"/>
    </location>
</feature>
<feature type="repeat" description="ANK 1">
    <location>
        <begin position="147"/>
        <end position="179"/>
    </location>
</feature>
<feature type="repeat" description="ANK 2">
    <location>
        <begin position="180"/>
        <end position="212"/>
    </location>
</feature>
<feature type="repeat" description="ANK 3">
    <location>
        <begin position="213"/>
        <end position="245"/>
    </location>
</feature>
<feature type="repeat" description="ANK 4">
    <location>
        <begin position="246"/>
        <end position="278"/>
    </location>
</feature>
<feature type="repeat" description="ANK 5">
    <location>
        <begin position="279"/>
        <end position="312"/>
    </location>
</feature>
<name>ANRA2_MOUSE</name>
<proteinExistence type="evidence at protein level"/>
<accession>Q99PE2</accession>